<organism>
    <name type="scientific">Syntrophotalea carbinolica (strain DSM 2380 / NBRC 103641 / GraBd1)</name>
    <name type="common">Pelobacter carbinolicus</name>
    <dbReference type="NCBI Taxonomy" id="338963"/>
    <lineage>
        <taxon>Bacteria</taxon>
        <taxon>Pseudomonadati</taxon>
        <taxon>Thermodesulfobacteriota</taxon>
        <taxon>Desulfuromonadia</taxon>
        <taxon>Desulfuromonadales</taxon>
        <taxon>Syntrophotaleaceae</taxon>
        <taxon>Syntrophotalea</taxon>
    </lineage>
</organism>
<comment type="function">
    <text evidence="1">Required for accurate and efficient protein synthesis under certain stress conditions. May act as a fidelity factor of the translation reaction, by catalyzing a one-codon backward translocation of tRNAs on improperly translocated ribosomes. Back-translocation proceeds from a post-translocation (POST) complex to a pre-translocation (PRE) complex, thus giving elongation factor G a second chance to translocate the tRNAs correctly. Binds to ribosomes in a GTP-dependent manner.</text>
</comment>
<comment type="catalytic activity">
    <reaction evidence="1">
        <text>GTP + H2O = GDP + phosphate + H(+)</text>
        <dbReference type="Rhea" id="RHEA:19669"/>
        <dbReference type="ChEBI" id="CHEBI:15377"/>
        <dbReference type="ChEBI" id="CHEBI:15378"/>
        <dbReference type="ChEBI" id="CHEBI:37565"/>
        <dbReference type="ChEBI" id="CHEBI:43474"/>
        <dbReference type="ChEBI" id="CHEBI:58189"/>
        <dbReference type="EC" id="3.6.5.n1"/>
    </reaction>
</comment>
<comment type="subcellular location">
    <subcellularLocation>
        <location evidence="1">Cell inner membrane</location>
        <topology evidence="1">Peripheral membrane protein</topology>
        <orientation evidence="1">Cytoplasmic side</orientation>
    </subcellularLocation>
</comment>
<comment type="similarity">
    <text evidence="1">Belongs to the TRAFAC class translation factor GTPase superfamily. Classic translation factor GTPase family. LepA subfamily.</text>
</comment>
<evidence type="ECO:0000255" key="1">
    <source>
        <dbReference type="HAMAP-Rule" id="MF_00071"/>
    </source>
</evidence>
<reference key="1">
    <citation type="submission" date="2005-10" db="EMBL/GenBank/DDBJ databases">
        <title>Complete sequence of Pelobacter carbinolicus DSM 2380.</title>
        <authorList>
            <person name="Copeland A."/>
            <person name="Lucas S."/>
            <person name="Lapidus A."/>
            <person name="Barry K."/>
            <person name="Detter J.C."/>
            <person name="Glavina T."/>
            <person name="Hammon N."/>
            <person name="Israni S."/>
            <person name="Pitluck S."/>
            <person name="Chertkov O."/>
            <person name="Schmutz J."/>
            <person name="Larimer F."/>
            <person name="Land M."/>
            <person name="Kyrpides N."/>
            <person name="Ivanova N."/>
            <person name="Richardson P."/>
        </authorList>
    </citation>
    <scope>NUCLEOTIDE SEQUENCE [LARGE SCALE GENOMIC DNA]</scope>
    <source>
        <strain>DSM 2380 / NBRC 103641 / GraBd1</strain>
    </source>
</reference>
<feature type="chain" id="PRO_0000224781" description="Elongation factor 4">
    <location>
        <begin position="1"/>
        <end position="599"/>
    </location>
</feature>
<feature type="domain" description="tr-type G">
    <location>
        <begin position="4"/>
        <end position="186"/>
    </location>
</feature>
<feature type="binding site" evidence="1">
    <location>
        <begin position="16"/>
        <end position="21"/>
    </location>
    <ligand>
        <name>GTP</name>
        <dbReference type="ChEBI" id="CHEBI:37565"/>
    </ligand>
</feature>
<feature type="binding site" evidence="1">
    <location>
        <begin position="133"/>
        <end position="136"/>
    </location>
    <ligand>
        <name>GTP</name>
        <dbReference type="ChEBI" id="CHEBI:37565"/>
    </ligand>
</feature>
<sequence length="599" mass="67109">MERSKIRNFSIIAHIDHGKSTLADRLLETTGALSDREKTNQFLDKLDLERERGITIKAQAVRLKYRAEDGQDYILNLIDTPGHVDFSYEVSRSLAACEGGMLVVDASQGVEAQTLANVYLAIDQNLEVFPVLNKVDLPGAEPARIKEEIEEIIGLDASDAVEASAKEGIGIHEILESIVEKVPAPKGDADAPLKALIFDSWYDSYQGVIMLVRIFDGTLKKGDKIQLMASKRSYEVLKIGAFSPHPVEFSEMAAGEVGFVIAGIKVLQDAKVGDTVTHLHRPAENPLAGFQEVKPMVYSGLYPIDSGDYDALRDAMEKLRLNDSSFSFEPENSLALGFGFRCGFLGLLHMEIIQERLEREFNMELITTAPTVRYRVITTKGEELIVDSANKLPELQYIDQILEPFIVASIHVPNDYVGGVLALCEEKRGIQREIKYLTSNRVMVVYELPLNEIVLDFYDRLKTVSRGYASLDYEFLDYRPSDLVRLNILVNAETVDALSLIVHRDKSQMRGRELVAKMKEFIPRQQYEVAVQAAIGNKVVARANVKALRKDVTAKCYGGDITRKRKLLEKQKEGKKRMKQVGNVELPQEAFLAILKVKE</sequence>
<proteinExistence type="inferred from homology"/>
<keyword id="KW-0997">Cell inner membrane</keyword>
<keyword id="KW-1003">Cell membrane</keyword>
<keyword id="KW-0342">GTP-binding</keyword>
<keyword id="KW-0378">Hydrolase</keyword>
<keyword id="KW-0472">Membrane</keyword>
<keyword id="KW-0547">Nucleotide-binding</keyword>
<keyword id="KW-0648">Protein biosynthesis</keyword>
<keyword id="KW-1185">Reference proteome</keyword>
<protein>
    <recommendedName>
        <fullName evidence="1">Elongation factor 4</fullName>
        <shortName evidence="1">EF-4</shortName>
        <ecNumber evidence="1">3.6.5.n1</ecNumber>
    </recommendedName>
    <alternativeName>
        <fullName evidence="1">Ribosomal back-translocase LepA</fullName>
    </alternativeName>
</protein>
<gene>
    <name evidence="1" type="primary">lepA</name>
    <name type="ordered locus">Pcar_1618</name>
</gene>
<dbReference type="EC" id="3.6.5.n1" evidence="1"/>
<dbReference type="EMBL" id="CP000142">
    <property type="protein sequence ID" value="ABA88862.1"/>
    <property type="molecule type" value="Genomic_DNA"/>
</dbReference>
<dbReference type="RefSeq" id="WP_011341349.1">
    <property type="nucleotide sequence ID" value="NC_007498.2"/>
</dbReference>
<dbReference type="SMR" id="Q3A445"/>
<dbReference type="STRING" id="338963.Pcar_1618"/>
<dbReference type="KEGG" id="pca:Pcar_1618"/>
<dbReference type="eggNOG" id="COG0481">
    <property type="taxonomic scope" value="Bacteria"/>
</dbReference>
<dbReference type="HOGENOM" id="CLU_009995_3_3_7"/>
<dbReference type="OrthoDB" id="9801591at2"/>
<dbReference type="Proteomes" id="UP000002534">
    <property type="component" value="Chromosome"/>
</dbReference>
<dbReference type="GO" id="GO:0005886">
    <property type="term" value="C:plasma membrane"/>
    <property type="evidence" value="ECO:0007669"/>
    <property type="project" value="UniProtKB-SubCell"/>
</dbReference>
<dbReference type="GO" id="GO:0005525">
    <property type="term" value="F:GTP binding"/>
    <property type="evidence" value="ECO:0007669"/>
    <property type="project" value="UniProtKB-UniRule"/>
</dbReference>
<dbReference type="GO" id="GO:0003924">
    <property type="term" value="F:GTPase activity"/>
    <property type="evidence" value="ECO:0007669"/>
    <property type="project" value="UniProtKB-UniRule"/>
</dbReference>
<dbReference type="GO" id="GO:0043022">
    <property type="term" value="F:ribosome binding"/>
    <property type="evidence" value="ECO:0007669"/>
    <property type="project" value="UniProtKB-UniRule"/>
</dbReference>
<dbReference type="GO" id="GO:0003746">
    <property type="term" value="F:translation elongation factor activity"/>
    <property type="evidence" value="ECO:0007669"/>
    <property type="project" value="UniProtKB-UniRule"/>
</dbReference>
<dbReference type="GO" id="GO:0045727">
    <property type="term" value="P:positive regulation of translation"/>
    <property type="evidence" value="ECO:0007669"/>
    <property type="project" value="UniProtKB-UniRule"/>
</dbReference>
<dbReference type="CDD" id="cd03699">
    <property type="entry name" value="EF4_II"/>
    <property type="match status" value="1"/>
</dbReference>
<dbReference type="CDD" id="cd16260">
    <property type="entry name" value="EF4_III"/>
    <property type="match status" value="1"/>
</dbReference>
<dbReference type="CDD" id="cd01890">
    <property type="entry name" value="LepA"/>
    <property type="match status" value="1"/>
</dbReference>
<dbReference type="CDD" id="cd03709">
    <property type="entry name" value="lepA_C"/>
    <property type="match status" value="1"/>
</dbReference>
<dbReference type="FunFam" id="3.40.50.300:FF:000078">
    <property type="entry name" value="Elongation factor 4"/>
    <property type="match status" value="1"/>
</dbReference>
<dbReference type="FunFam" id="2.40.30.10:FF:000015">
    <property type="entry name" value="Translation factor GUF1, mitochondrial"/>
    <property type="match status" value="1"/>
</dbReference>
<dbReference type="FunFam" id="3.30.70.240:FF:000007">
    <property type="entry name" value="Translation factor GUF1, mitochondrial"/>
    <property type="match status" value="1"/>
</dbReference>
<dbReference type="FunFam" id="3.30.70.2570:FF:000001">
    <property type="entry name" value="Translation factor GUF1, mitochondrial"/>
    <property type="match status" value="1"/>
</dbReference>
<dbReference type="FunFam" id="3.30.70.870:FF:000004">
    <property type="entry name" value="Translation factor GUF1, mitochondrial"/>
    <property type="match status" value="1"/>
</dbReference>
<dbReference type="Gene3D" id="3.30.70.240">
    <property type="match status" value="1"/>
</dbReference>
<dbReference type="Gene3D" id="3.30.70.2570">
    <property type="entry name" value="Elongation factor 4, C-terminal domain"/>
    <property type="match status" value="1"/>
</dbReference>
<dbReference type="Gene3D" id="3.30.70.870">
    <property type="entry name" value="Elongation Factor G (Translational Gtpase), domain 3"/>
    <property type="match status" value="1"/>
</dbReference>
<dbReference type="Gene3D" id="3.40.50.300">
    <property type="entry name" value="P-loop containing nucleotide triphosphate hydrolases"/>
    <property type="match status" value="1"/>
</dbReference>
<dbReference type="Gene3D" id="2.40.30.10">
    <property type="entry name" value="Translation factors"/>
    <property type="match status" value="1"/>
</dbReference>
<dbReference type="HAMAP" id="MF_00071">
    <property type="entry name" value="LepA"/>
    <property type="match status" value="1"/>
</dbReference>
<dbReference type="InterPro" id="IPR006297">
    <property type="entry name" value="EF-4"/>
</dbReference>
<dbReference type="InterPro" id="IPR035647">
    <property type="entry name" value="EFG_III/V"/>
</dbReference>
<dbReference type="InterPro" id="IPR000640">
    <property type="entry name" value="EFG_V-like"/>
</dbReference>
<dbReference type="InterPro" id="IPR004161">
    <property type="entry name" value="EFTu-like_2"/>
</dbReference>
<dbReference type="InterPro" id="IPR031157">
    <property type="entry name" value="G_TR_CS"/>
</dbReference>
<dbReference type="InterPro" id="IPR038363">
    <property type="entry name" value="LepA_C_sf"/>
</dbReference>
<dbReference type="InterPro" id="IPR013842">
    <property type="entry name" value="LepA_CTD"/>
</dbReference>
<dbReference type="InterPro" id="IPR035654">
    <property type="entry name" value="LepA_IV"/>
</dbReference>
<dbReference type="InterPro" id="IPR027417">
    <property type="entry name" value="P-loop_NTPase"/>
</dbReference>
<dbReference type="InterPro" id="IPR005225">
    <property type="entry name" value="Small_GTP-bd"/>
</dbReference>
<dbReference type="InterPro" id="IPR000795">
    <property type="entry name" value="T_Tr_GTP-bd_dom"/>
</dbReference>
<dbReference type="InterPro" id="IPR009000">
    <property type="entry name" value="Transl_B-barrel_sf"/>
</dbReference>
<dbReference type="NCBIfam" id="TIGR01393">
    <property type="entry name" value="lepA"/>
    <property type="match status" value="1"/>
</dbReference>
<dbReference type="NCBIfam" id="TIGR00231">
    <property type="entry name" value="small_GTP"/>
    <property type="match status" value="1"/>
</dbReference>
<dbReference type="PANTHER" id="PTHR43512:SF4">
    <property type="entry name" value="TRANSLATION FACTOR GUF1 HOMOLOG, CHLOROPLASTIC"/>
    <property type="match status" value="1"/>
</dbReference>
<dbReference type="PANTHER" id="PTHR43512">
    <property type="entry name" value="TRANSLATION FACTOR GUF1-RELATED"/>
    <property type="match status" value="1"/>
</dbReference>
<dbReference type="Pfam" id="PF00679">
    <property type="entry name" value="EFG_C"/>
    <property type="match status" value="1"/>
</dbReference>
<dbReference type="Pfam" id="PF00009">
    <property type="entry name" value="GTP_EFTU"/>
    <property type="match status" value="1"/>
</dbReference>
<dbReference type="Pfam" id="PF03144">
    <property type="entry name" value="GTP_EFTU_D2"/>
    <property type="match status" value="1"/>
</dbReference>
<dbReference type="Pfam" id="PF06421">
    <property type="entry name" value="LepA_C"/>
    <property type="match status" value="1"/>
</dbReference>
<dbReference type="PRINTS" id="PR00315">
    <property type="entry name" value="ELONGATNFCT"/>
</dbReference>
<dbReference type="SUPFAM" id="SSF54980">
    <property type="entry name" value="EF-G C-terminal domain-like"/>
    <property type="match status" value="2"/>
</dbReference>
<dbReference type="SUPFAM" id="SSF52540">
    <property type="entry name" value="P-loop containing nucleoside triphosphate hydrolases"/>
    <property type="match status" value="1"/>
</dbReference>
<dbReference type="SUPFAM" id="SSF50447">
    <property type="entry name" value="Translation proteins"/>
    <property type="match status" value="1"/>
</dbReference>
<dbReference type="PROSITE" id="PS00301">
    <property type="entry name" value="G_TR_1"/>
    <property type="match status" value="1"/>
</dbReference>
<dbReference type="PROSITE" id="PS51722">
    <property type="entry name" value="G_TR_2"/>
    <property type="match status" value="1"/>
</dbReference>
<name>LEPA_SYNC1</name>
<accession>Q3A445</accession>